<proteinExistence type="evidence at protein level"/>
<dbReference type="SMR" id="P0C0U6"/>
<dbReference type="GO" id="GO:0072562">
    <property type="term" value="C:blood microparticle"/>
    <property type="evidence" value="ECO:0007669"/>
    <property type="project" value="TreeGrafter"/>
</dbReference>
<dbReference type="GO" id="GO:0031838">
    <property type="term" value="C:haptoglobin-hemoglobin complex"/>
    <property type="evidence" value="ECO:0007669"/>
    <property type="project" value="TreeGrafter"/>
</dbReference>
<dbReference type="GO" id="GO:0005833">
    <property type="term" value="C:hemoglobin complex"/>
    <property type="evidence" value="ECO:0007669"/>
    <property type="project" value="InterPro"/>
</dbReference>
<dbReference type="GO" id="GO:0031720">
    <property type="term" value="F:haptoglobin binding"/>
    <property type="evidence" value="ECO:0007669"/>
    <property type="project" value="TreeGrafter"/>
</dbReference>
<dbReference type="GO" id="GO:0020037">
    <property type="term" value="F:heme binding"/>
    <property type="evidence" value="ECO:0007669"/>
    <property type="project" value="InterPro"/>
</dbReference>
<dbReference type="GO" id="GO:0005506">
    <property type="term" value="F:iron ion binding"/>
    <property type="evidence" value="ECO:0007669"/>
    <property type="project" value="InterPro"/>
</dbReference>
<dbReference type="GO" id="GO:0043177">
    <property type="term" value="F:organic acid binding"/>
    <property type="evidence" value="ECO:0007669"/>
    <property type="project" value="TreeGrafter"/>
</dbReference>
<dbReference type="GO" id="GO:0019825">
    <property type="term" value="F:oxygen binding"/>
    <property type="evidence" value="ECO:0007669"/>
    <property type="project" value="InterPro"/>
</dbReference>
<dbReference type="GO" id="GO:0005344">
    <property type="term" value="F:oxygen carrier activity"/>
    <property type="evidence" value="ECO:0007669"/>
    <property type="project" value="UniProtKB-KW"/>
</dbReference>
<dbReference type="GO" id="GO:0004601">
    <property type="term" value="F:peroxidase activity"/>
    <property type="evidence" value="ECO:0007669"/>
    <property type="project" value="TreeGrafter"/>
</dbReference>
<dbReference type="GO" id="GO:0042744">
    <property type="term" value="P:hydrogen peroxide catabolic process"/>
    <property type="evidence" value="ECO:0007669"/>
    <property type="project" value="TreeGrafter"/>
</dbReference>
<dbReference type="CDD" id="cd08927">
    <property type="entry name" value="Hb-alpha-like"/>
    <property type="match status" value="1"/>
</dbReference>
<dbReference type="FunFam" id="1.10.490.10:FF:000002">
    <property type="entry name" value="Hemoglobin subunit alpha"/>
    <property type="match status" value="1"/>
</dbReference>
<dbReference type="Gene3D" id="1.10.490.10">
    <property type="entry name" value="Globins"/>
    <property type="match status" value="1"/>
</dbReference>
<dbReference type="InterPro" id="IPR000971">
    <property type="entry name" value="Globin"/>
</dbReference>
<dbReference type="InterPro" id="IPR009050">
    <property type="entry name" value="Globin-like_sf"/>
</dbReference>
<dbReference type="InterPro" id="IPR012292">
    <property type="entry name" value="Globin/Proto"/>
</dbReference>
<dbReference type="InterPro" id="IPR002338">
    <property type="entry name" value="Hemoglobin_a-typ"/>
</dbReference>
<dbReference type="InterPro" id="IPR050056">
    <property type="entry name" value="Hemoglobin_oxygen_transport"/>
</dbReference>
<dbReference type="InterPro" id="IPR002339">
    <property type="entry name" value="Hemoglobin_pi"/>
</dbReference>
<dbReference type="PANTHER" id="PTHR11442">
    <property type="entry name" value="HEMOGLOBIN FAMILY MEMBER"/>
    <property type="match status" value="1"/>
</dbReference>
<dbReference type="PANTHER" id="PTHR11442:SF48">
    <property type="entry name" value="HEMOGLOBIN SUBUNIT ALPHA"/>
    <property type="match status" value="1"/>
</dbReference>
<dbReference type="Pfam" id="PF00042">
    <property type="entry name" value="Globin"/>
    <property type="match status" value="1"/>
</dbReference>
<dbReference type="PRINTS" id="PR00612">
    <property type="entry name" value="ALPHAHAEM"/>
</dbReference>
<dbReference type="PRINTS" id="PR00815">
    <property type="entry name" value="PIHAEM"/>
</dbReference>
<dbReference type="SUPFAM" id="SSF46458">
    <property type="entry name" value="Globin-like"/>
    <property type="match status" value="1"/>
</dbReference>
<dbReference type="PROSITE" id="PS01033">
    <property type="entry name" value="GLOBIN"/>
    <property type="match status" value="1"/>
</dbReference>
<accession>P0C0U6</accession>
<comment type="function">
    <text>Involved in oxygen transport from the lung to the various peripheral tissues.</text>
</comment>
<comment type="subunit">
    <text>Heterotetramer of two alpha chains and two beta chains.</text>
</comment>
<comment type="tissue specificity">
    <text>Red blood cells.</text>
</comment>
<comment type="similarity">
    <text evidence="1">Belongs to the globin family.</text>
</comment>
<sequence length="141" mass="15469">VLTEEDKSRVRAAWGPVSKNAELYGAETLTRLFTAYPATKTYFHHFDLSPGSSNLKTHGKKVIDAITEAVNNLDDVAGALSKLSDLHAQKLRVDPVNFKLLGHCLEVTIAAHNGGPLKPEVILSLDKFLCLVAKTLVSRYR</sequence>
<feature type="chain" id="PRO_0000052620" description="Hemoglobin subunit alpha-A">
    <location>
        <begin position="1"/>
        <end position="141"/>
    </location>
</feature>
<feature type="domain" description="Globin" evidence="1">
    <location>
        <begin position="1"/>
        <end position="141"/>
    </location>
</feature>
<feature type="binding site" evidence="1">
    <location>
        <position position="58"/>
    </location>
    <ligand>
        <name>O2</name>
        <dbReference type="ChEBI" id="CHEBI:15379"/>
    </ligand>
</feature>
<feature type="binding site" description="proximal binding residue" evidence="1">
    <location>
        <position position="87"/>
    </location>
    <ligand>
        <name>heme b</name>
        <dbReference type="ChEBI" id="CHEBI:60344"/>
    </ligand>
    <ligandPart>
        <name>Fe</name>
        <dbReference type="ChEBI" id="CHEBI:18248"/>
    </ligandPart>
</feature>
<organism>
    <name type="scientific">Drymarchon melanurus erebennus</name>
    <name type="common">Texas indigo snake</name>
    <name type="synonym">Drymarchon corais erebennus</name>
    <dbReference type="NCBI Taxonomy" id="358746"/>
    <lineage>
        <taxon>Eukaryota</taxon>
        <taxon>Metazoa</taxon>
        <taxon>Chordata</taxon>
        <taxon>Craniata</taxon>
        <taxon>Vertebrata</taxon>
        <taxon>Euteleostomi</taxon>
        <taxon>Lepidosauria</taxon>
        <taxon>Squamata</taxon>
        <taxon>Bifurcata</taxon>
        <taxon>Unidentata</taxon>
        <taxon>Episquamata</taxon>
        <taxon>Toxicofera</taxon>
        <taxon>Serpentes</taxon>
        <taxon>Colubroidea</taxon>
        <taxon>Colubridae</taxon>
        <taxon>Colubrinae</taxon>
        <taxon>Drymarchon</taxon>
    </lineage>
</organism>
<reference key="1">
    <citation type="journal article" date="2002" name="Biol. Chem.">
        <title>The primary structure of three hemoglobin chains from the indigo snake (Drymarchon corais erebennus, Serpentes): first evidence for alphaD chains and two beta chain types in snakes.</title>
        <authorList>
            <person name="Stoeckelhuber M."/>
            <person name="Gorr T."/>
            <person name="Kleinschmidt T."/>
        </authorList>
    </citation>
    <scope>PROTEIN SEQUENCE</scope>
</reference>
<protein>
    <recommendedName>
        <fullName>Hemoglobin subunit alpha-A</fullName>
    </recommendedName>
    <alternativeName>
        <fullName>Alpha-A-globin</fullName>
    </alternativeName>
    <alternativeName>
        <fullName>Hemoglobin alpha-A chain</fullName>
    </alternativeName>
</protein>
<evidence type="ECO:0000255" key="1">
    <source>
        <dbReference type="PROSITE-ProRule" id="PRU00238"/>
    </source>
</evidence>
<name>HBA_DRYME</name>
<keyword id="KW-0903">Direct protein sequencing</keyword>
<keyword id="KW-0349">Heme</keyword>
<keyword id="KW-0408">Iron</keyword>
<keyword id="KW-0479">Metal-binding</keyword>
<keyword id="KW-0561">Oxygen transport</keyword>
<keyword id="KW-0813">Transport</keyword>